<keyword id="KW-0963">Cytoplasm</keyword>
<keyword id="KW-0489">Methyltransferase</keyword>
<keyword id="KW-0545">Nucleotide biosynthesis</keyword>
<keyword id="KW-0808">Transferase</keyword>
<comment type="function">
    <text evidence="1">Catalyzes the reductive methylation of 2'-deoxyuridine-5'-monophosphate (dUMP) to 2'-deoxythymidine-5'-monophosphate (dTMP) while utilizing 5,10-methylenetetrahydrofolate (mTHF) as the methyl donor and reductant in the reaction, yielding dihydrofolate (DHF) as a by-product. This enzymatic reaction provides an intracellular de novo source of dTMP, an essential precursor for DNA biosynthesis.</text>
</comment>
<comment type="catalytic activity">
    <reaction evidence="1">
        <text>dUMP + (6R)-5,10-methylene-5,6,7,8-tetrahydrofolate = 7,8-dihydrofolate + dTMP</text>
        <dbReference type="Rhea" id="RHEA:12104"/>
        <dbReference type="ChEBI" id="CHEBI:15636"/>
        <dbReference type="ChEBI" id="CHEBI:57451"/>
        <dbReference type="ChEBI" id="CHEBI:63528"/>
        <dbReference type="ChEBI" id="CHEBI:246422"/>
        <dbReference type="EC" id="2.1.1.45"/>
    </reaction>
</comment>
<comment type="pathway">
    <text evidence="1">Pyrimidine metabolism; dTTP biosynthesis.</text>
</comment>
<comment type="subunit">
    <text evidence="1">Homodimer.</text>
</comment>
<comment type="subcellular location">
    <subcellularLocation>
        <location evidence="1">Cytoplasm</location>
    </subcellularLocation>
</comment>
<comment type="similarity">
    <text evidence="1">Belongs to the thymidylate synthase family. Bacterial-type ThyA subfamily.</text>
</comment>
<accession>B1IU17</accession>
<protein>
    <recommendedName>
        <fullName evidence="1">Thymidylate synthase</fullName>
        <shortName evidence="1">TS</shortName>
        <shortName evidence="1">TSase</shortName>
        <ecNumber evidence="1">2.1.1.45</ecNumber>
    </recommendedName>
</protein>
<reference key="1">
    <citation type="submission" date="2008-02" db="EMBL/GenBank/DDBJ databases">
        <title>Complete sequence of Escherichia coli C str. ATCC 8739.</title>
        <authorList>
            <person name="Copeland A."/>
            <person name="Lucas S."/>
            <person name="Lapidus A."/>
            <person name="Glavina del Rio T."/>
            <person name="Dalin E."/>
            <person name="Tice H."/>
            <person name="Bruce D."/>
            <person name="Goodwin L."/>
            <person name="Pitluck S."/>
            <person name="Kiss H."/>
            <person name="Brettin T."/>
            <person name="Detter J.C."/>
            <person name="Han C."/>
            <person name="Kuske C.R."/>
            <person name="Schmutz J."/>
            <person name="Larimer F."/>
            <person name="Land M."/>
            <person name="Hauser L."/>
            <person name="Kyrpides N."/>
            <person name="Mikhailova N."/>
            <person name="Ingram L."/>
            <person name="Richardson P."/>
        </authorList>
    </citation>
    <scope>NUCLEOTIDE SEQUENCE [LARGE SCALE GENOMIC DNA]</scope>
    <source>
        <strain>ATCC 8739 / DSM 1576 / NBRC 3972 / NCIMB 8545 / WDCM 00012 / Crooks</strain>
    </source>
</reference>
<proteinExistence type="inferred from homology"/>
<organism>
    <name type="scientific">Escherichia coli (strain ATCC 8739 / DSM 1576 / NBRC 3972 / NCIMB 8545 / WDCM 00012 / Crooks)</name>
    <dbReference type="NCBI Taxonomy" id="481805"/>
    <lineage>
        <taxon>Bacteria</taxon>
        <taxon>Pseudomonadati</taxon>
        <taxon>Pseudomonadota</taxon>
        <taxon>Gammaproteobacteria</taxon>
        <taxon>Enterobacterales</taxon>
        <taxon>Enterobacteriaceae</taxon>
        <taxon>Escherichia</taxon>
    </lineage>
</organism>
<feature type="chain" id="PRO_1000073874" description="Thymidylate synthase">
    <location>
        <begin position="1"/>
        <end position="264"/>
    </location>
</feature>
<feature type="active site" description="Nucleophile" evidence="1">
    <location>
        <position position="146"/>
    </location>
</feature>
<feature type="binding site" description="in other chain" evidence="1">
    <location>
        <position position="21"/>
    </location>
    <ligand>
        <name>dUMP</name>
        <dbReference type="ChEBI" id="CHEBI:246422"/>
        <note>ligand shared between dimeric partners</note>
    </ligand>
</feature>
<feature type="binding site" evidence="1">
    <location>
        <position position="51"/>
    </location>
    <ligand>
        <name>(6R)-5,10-methylene-5,6,7,8-tetrahydrofolate</name>
        <dbReference type="ChEBI" id="CHEBI:15636"/>
    </ligand>
</feature>
<feature type="binding site" evidence="1">
    <location>
        <begin position="126"/>
        <end position="127"/>
    </location>
    <ligand>
        <name>dUMP</name>
        <dbReference type="ChEBI" id="CHEBI:246422"/>
        <note>ligand shared between dimeric partners</note>
    </ligand>
</feature>
<feature type="binding site" description="in other chain" evidence="1">
    <location>
        <begin position="166"/>
        <end position="169"/>
    </location>
    <ligand>
        <name>dUMP</name>
        <dbReference type="ChEBI" id="CHEBI:246422"/>
        <note>ligand shared between dimeric partners</note>
    </ligand>
</feature>
<feature type="binding site" evidence="1">
    <location>
        <position position="169"/>
    </location>
    <ligand>
        <name>(6R)-5,10-methylene-5,6,7,8-tetrahydrofolate</name>
        <dbReference type="ChEBI" id="CHEBI:15636"/>
    </ligand>
</feature>
<feature type="binding site" description="in other chain" evidence="1">
    <location>
        <position position="177"/>
    </location>
    <ligand>
        <name>dUMP</name>
        <dbReference type="ChEBI" id="CHEBI:246422"/>
        <note>ligand shared between dimeric partners</note>
    </ligand>
</feature>
<feature type="binding site" description="in other chain" evidence="1">
    <location>
        <begin position="207"/>
        <end position="209"/>
    </location>
    <ligand>
        <name>dUMP</name>
        <dbReference type="ChEBI" id="CHEBI:246422"/>
        <note>ligand shared between dimeric partners</note>
    </ligand>
</feature>
<feature type="binding site" evidence="1">
    <location>
        <position position="263"/>
    </location>
    <ligand>
        <name>(6R)-5,10-methylene-5,6,7,8-tetrahydrofolate</name>
        <dbReference type="ChEBI" id="CHEBI:15636"/>
    </ligand>
</feature>
<dbReference type="EC" id="2.1.1.45" evidence="1"/>
<dbReference type="EMBL" id="CP000946">
    <property type="protein sequence ID" value="ACA76557.1"/>
    <property type="molecule type" value="Genomic_DNA"/>
</dbReference>
<dbReference type="RefSeq" id="WP_000816241.1">
    <property type="nucleotide sequence ID" value="NZ_MTFT01000004.1"/>
</dbReference>
<dbReference type="BMRB" id="B1IU17"/>
<dbReference type="SMR" id="B1IU17"/>
<dbReference type="KEGG" id="ecl:EcolC_0888"/>
<dbReference type="HOGENOM" id="CLU_021669_0_0_6"/>
<dbReference type="UniPathway" id="UPA00575"/>
<dbReference type="GO" id="GO:0005829">
    <property type="term" value="C:cytosol"/>
    <property type="evidence" value="ECO:0007669"/>
    <property type="project" value="TreeGrafter"/>
</dbReference>
<dbReference type="GO" id="GO:0004799">
    <property type="term" value="F:thymidylate synthase activity"/>
    <property type="evidence" value="ECO:0007669"/>
    <property type="project" value="UniProtKB-UniRule"/>
</dbReference>
<dbReference type="GO" id="GO:0006231">
    <property type="term" value="P:dTMP biosynthetic process"/>
    <property type="evidence" value="ECO:0007669"/>
    <property type="project" value="UniProtKB-UniRule"/>
</dbReference>
<dbReference type="GO" id="GO:0006235">
    <property type="term" value="P:dTTP biosynthetic process"/>
    <property type="evidence" value="ECO:0007669"/>
    <property type="project" value="UniProtKB-UniRule"/>
</dbReference>
<dbReference type="GO" id="GO:0032259">
    <property type="term" value="P:methylation"/>
    <property type="evidence" value="ECO:0007669"/>
    <property type="project" value="UniProtKB-KW"/>
</dbReference>
<dbReference type="CDD" id="cd00351">
    <property type="entry name" value="TS_Pyrimidine_HMase"/>
    <property type="match status" value="1"/>
</dbReference>
<dbReference type="FunFam" id="3.30.572.10:FF:000001">
    <property type="entry name" value="Thymidylate synthase"/>
    <property type="match status" value="1"/>
</dbReference>
<dbReference type="Gene3D" id="3.30.572.10">
    <property type="entry name" value="Thymidylate synthase/dCMP hydroxymethylase domain"/>
    <property type="match status" value="1"/>
</dbReference>
<dbReference type="HAMAP" id="MF_00008">
    <property type="entry name" value="Thymidy_synth_bact"/>
    <property type="match status" value="1"/>
</dbReference>
<dbReference type="InterPro" id="IPR045097">
    <property type="entry name" value="Thymidate_synth/dCMP_Mease"/>
</dbReference>
<dbReference type="InterPro" id="IPR023451">
    <property type="entry name" value="Thymidate_synth/dCMP_Mease_dom"/>
</dbReference>
<dbReference type="InterPro" id="IPR036926">
    <property type="entry name" value="Thymidate_synth/dCMP_Mease_sf"/>
</dbReference>
<dbReference type="InterPro" id="IPR000398">
    <property type="entry name" value="Thymidylate_synthase"/>
</dbReference>
<dbReference type="InterPro" id="IPR020940">
    <property type="entry name" value="Thymidylate_synthase_AS"/>
</dbReference>
<dbReference type="NCBIfam" id="NF002497">
    <property type="entry name" value="PRK01827.1-3"/>
    <property type="match status" value="1"/>
</dbReference>
<dbReference type="NCBIfam" id="NF002499">
    <property type="entry name" value="PRK01827.1-5"/>
    <property type="match status" value="1"/>
</dbReference>
<dbReference type="NCBIfam" id="TIGR03284">
    <property type="entry name" value="thym_sym"/>
    <property type="match status" value="2"/>
</dbReference>
<dbReference type="PANTHER" id="PTHR11548:SF9">
    <property type="entry name" value="THYMIDYLATE SYNTHASE"/>
    <property type="match status" value="1"/>
</dbReference>
<dbReference type="PANTHER" id="PTHR11548">
    <property type="entry name" value="THYMIDYLATE SYNTHASE 1"/>
    <property type="match status" value="1"/>
</dbReference>
<dbReference type="Pfam" id="PF00303">
    <property type="entry name" value="Thymidylat_synt"/>
    <property type="match status" value="1"/>
</dbReference>
<dbReference type="PRINTS" id="PR00108">
    <property type="entry name" value="THYMDSNTHASE"/>
</dbReference>
<dbReference type="SUPFAM" id="SSF55831">
    <property type="entry name" value="Thymidylate synthase/dCMP hydroxymethylase"/>
    <property type="match status" value="1"/>
</dbReference>
<dbReference type="PROSITE" id="PS00091">
    <property type="entry name" value="THYMIDYLATE_SYNTHASE"/>
    <property type="match status" value="1"/>
</dbReference>
<gene>
    <name evidence="1" type="primary">thyA</name>
    <name type="ordered locus">EcolC_0888</name>
</gene>
<evidence type="ECO:0000255" key="1">
    <source>
        <dbReference type="HAMAP-Rule" id="MF_00008"/>
    </source>
</evidence>
<name>TYSY_ECOLC</name>
<sequence>MKQYLELMQKVLDEGTQKNDRTGTGTLSIFGHQMRFNLQDGFPLVTTKRCHLRSIIHELLWFLQGNTNIAYLHENNVTIWDEWADENGDLGPVYGKQWRAWPTPDGRHIDQITTVLNQLKNDPDSRRIIVSAWNVGELDKMALAPCHAFFQFYVADGKLSCQLYQRSCDVFLGLPFNIASYALLVHMMAQQCDLEVGDFVWTGGDTHLYSNHMDQTHLQLSREPRPLPKLIIKRKPESIFDYRFEDFEIEGYDPHPGIKAPVAI</sequence>